<proteinExistence type="inferred from homology"/>
<reference key="1">
    <citation type="journal article" date="2011" name="BMC Genomics">
        <title>Complete genome sequence of the filamentous anoxygenic phototrophic bacterium Chloroflexus aurantiacus.</title>
        <authorList>
            <person name="Tang K.H."/>
            <person name="Barry K."/>
            <person name="Chertkov O."/>
            <person name="Dalin E."/>
            <person name="Han C.S."/>
            <person name="Hauser L.J."/>
            <person name="Honchak B.M."/>
            <person name="Karbach L.E."/>
            <person name="Land M.L."/>
            <person name="Lapidus A."/>
            <person name="Larimer F.W."/>
            <person name="Mikhailova N."/>
            <person name="Pitluck S."/>
            <person name="Pierson B.K."/>
            <person name="Blankenship R.E."/>
        </authorList>
    </citation>
    <scope>NUCLEOTIDE SEQUENCE [LARGE SCALE GENOMIC DNA]</scope>
    <source>
        <strain>ATCC 29366 / DSM 635 / J-10-fl</strain>
    </source>
</reference>
<feature type="chain" id="PRO_0000326680" description="Acylphosphatase">
    <location>
        <begin position="1"/>
        <end position="92"/>
    </location>
</feature>
<feature type="domain" description="Acylphosphatase-like" evidence="1">
    <location>
        <begin position="5"/>
        <end position="92"/>
    </location>
</feature>
<feature type="active site" evidence="1">
    <location>
        <position position="20"/>
    </location>
</feature>
<feature type="active site" evidence="1">
    <location>
        <position position="38"/>
    </location>
</feature>
<comment type="catalytic activity">
    <reaction>
        <text>an acyl phosphate + H2O = a carboxylate + phosphate + H(+)</text>
        <dbReference type="Rhea" id="RHEA:14965"/>
        <dbReference type="ChEBI" id="CHEBI:15377"/>
        <dbReference type="ChEBI" id="CHEBI:15378"/>
        <dbReference type="ChEBI" id="CHEBI:29067"/>
        <dbReference type="ChEBI" id="CHEBI:43474"/>
        <dbReference type="ChEBI" id="CHEBI:59918"/>
        <dbReference type="EC" id="3.6.1.7"/>
    </reaction>
</comment>
<comment type="similarity">
    <text evidence="2">Belongs to the acylphosphatase family.</text>
</comment>
<dbReference type="EC" id="3.6.1.7"/>
<dbReference type="EMBL" id="CP000909">
    <property type="protein sequence ID" value="ABY36777.1"/>
    <property type="molecule type" value="Genomic_DNA"/>
</dbReference>
<dbReference type="RefSeq" id="WP_012259430.1">
    <property type="nucleotide sequence ID" value="NC_010175.1"/>
</dbReference>
<dbReference type="RefSeq" id="YP_001637166.1">
    <property type="nucleotide sequence ID" value="NC_010175.1"/>
</dbReference>
<dbReference type="SMR" id="A9WAI7"/>
<dbReference type="FunCoup" id="A9WAI7">
    <property type="interactions" value="183"/>
</dbReference>
<dbReference type="STRING" id="324602.Caur_3593"/>
<dbReference type="EnsemblBacteria" id="ABY36777">
    <property type="protein sequence ID" value="ABY36777"/>
    <property type="gene ID" value="Caur_3593"/>
</dbReference>
<dbReference type="KEGG" id="cau:Caur_3593"/>
<dbReference type="PATRIC" id="fig|324602.8.peg.4044"/>
<dbReference type="eggNOG" id="COG1254">
    <property type="taxonomic scope" value="Bacteria"/>
</dbReference>
<dbReference type="HOGENOM" id="CLU_141932_3_2_0"/>
<dbReference type="InParanoid" id="A9WAI7"/>
<dbReference type="Proteomes" id="UP000002008">
    <property type="component" value="Chromosome"/>
</dbReference>
<dbReference type="GO" id="GO:0003998">
    <property type="term" value="F:acylphosphatase activity"/>
    <property type="evidence" value="ECO:0000318"/>
    <property type="project" value="GO_Central"/>
</dbReference>
<dbReference type="FunFam" id="3.30.70.100:FF:000012">
    <property type="entry name" value="Acylphosphatase"/>
    <property type="match status" value="1"/>
</dbReference>
<dbReference type="Gene3D" id="3.30.70.100">
    <property type="match status" value="1"/>
</dbReference>
<dbReference type="InterPro" id="IPR020456">
    <property type="entry name" value="Acylphosphatase"/>
</dbReference>
<dbReference type="InterPro" id="IPR001792">
    <property type="entry name" value="Acylphosphatase-like_dom"/>
</dbReference>
<dbReference type="InterPro" id="IPR036046">
    <property type="entry name" value="Acylphosphatase-like_dom_sf"/>
</dbReference>
<dbReference type="InterPro" id="IPR017968">
    <property type="entry name" value="Acylphosphatase_CS"/>
</dbReference>
<dbReference type="NCBIfam" id="NF011013">
    <property type="entry name" value="PRK14441.1"/>
    <property type="match status" value="1"/>
</dbReference>
<dbReference type="NCBIfam" id="NF011016">
    <property type="entry name" value="PRK14444.1"/>
    <property type="match status" value="1"/>
</dbReference>
<dbReference type="PANTHER" id="PTHR47268">
    <property type="entry name" value="ACYLPHOSPHATASE"/>
    <property type="match status" value="1"/>
</dbReference>
<dbReference type="PANTHER" id="PTHR47268:SF4">
    <property type="entry name" value="ACYLPHOSPHATASE"/>
    <property type="match status" value="1"/>
</dbReference>
<dbReference type="Pfam" id="PF00708">
    <property type="entry name" value="Acylphosphatase"/>
    <property type="match status" value="1"/>
</dbReference>
<dbReference type="PRINTS" id="PR00112">
    <property type="entry name" value="ACYLPHPHTASE"/>
</dbReference>
<dbReference type="SUPFAM" id="SSF54975">
    <property type="entry name" value="Acylphosphatase/BLUF domain-like"/>
    <property type="match status" value="1"/>
</dbReference>
<dbReference type="PROSITE" id="PS00150">
    <property type="entry name" value="ACYLPHOSPHATASE_1"/>
    <property type="match status" value="1"/>
</dbReference>
<dbReference type="PROSITE" id="PS00151">
    <property type="entry name" value="ACYLPHOSPHATASE_2"/>
    <property type="match status" value="1"/>
</dbReference>
<dbReference type="PROSITE" id="PS51160">
    <property type="entry name" value="ACYLPHOSPHATASE_3"/>
    <property type="match status" value="1"/>
</dbReference>
<sequence length="92" mass="10519">MDLVRAHVFISGRVQGVSFRAYTRDRAREAQVKGWVRNLSDGRVEAVFEGTRPAVQKLISWCYSGPSQAQVERVEVHWEEPTGKEGIFTIVW</sequence>
<organism>
    <name type="scientific">Chloroflexus aurantiacus (strain ATCC 29366 / DSM 635 / J-10-fl)</name>
    <dbReference type="NCBI Taxonomy" id="324602"/>
    <lineage>
        <taxon>Bacteria</taxon>
        <taxon>Bacillati</taxon>
        <taxon>Chloroflexota</taxon>
        <taxon>Chloroflexia</taxon>
        <taxon>Chloroflexales</taxon>
        <taxon>Chloroflexineae</taxon>
        <taxon>Chloroflexaceae</taxon>
        <taxon>Chloroflexus</taxon>
    </lineage>
</organism>
<protein>
    <recommendedName>
        <fullName>Acylphosphatase</fullName>
        <ecNumber>3.6.1.7</ecNumber>
    </recommendedName>
    <alternativeName>
        <fullName>Acylphosphate phosphohydrolase</fullName>
    </alternativeName>
</protein>
<name>ACYP_CHLAA</name>
<evidence type="ECO:0000255" key="1">
    <source>
        <dbReference type="PROSITE-ProRule" id="PRU00520"/>
    </source>
</evidence>
<evidence type="ECO:0000305" key="2"/>
<keyword id="KW-0378">Hydrolase</keyword>
<keyword id="KW-1185">Reference proteome</keyword>
<accession>A9WAI7</accession>
<gene>
    <name type="primary">acyP</name>
    <name type="ordered locus">Caur_3593</name>
</gene>